<proteinExistence type="inferred from homology"/>
<comment type="function">
    <text evidence="1">Binds 16S rRNA, required for the assembly of 30S particles and may also be responsible for determining the conformation of the 16S rRNA at the A site.</text>
</comment>
<comment type="subunit">
    <text evidence="1">Part of the 30S ribosomal subunit. Contacts proteins S3 and S10.</text>
</comment>
<comment type="similarity">
    <text evidence="1">Belongs to the universal ribosomal protein uS14 family.</text>
</comment>
<feature type="chain" id="PRO_0000130883" description="Small ribosomal subunit protein uS14">
    <location>
        <begin position="1"/>
        <end position="101"/>
    </location>
</feature>
<accession>Q9A8U0</accession>
<name>RS14_CAUVC</name>
<dbReference type="EMBL" id="AE005673">
    <property type="protein sequence ID" value="AAK23242.1"/>
    <property type="molecule type" value="Genomic_DNA"/>
</dbReference>
<dbReference type="PIR" id="F87405">
    <property type="entry name" value="F87405"/>
</dbReference>
<dbReference type="RefSeq" id="NP_420074.1">
    <property type="nucleotide sequence ID" value="NC_002696.2"/>
</dbReference>
<dbReference type="RefSeq" id="WP_010919140.1">
    <property type="nucleotide sequence ID" value="NC_002696.2"/>
</dbReference>
<dbReference type="SMR" id="Q9A8U0"/>
<dbReference type="STRING" id="190650.CC_1261"/>
<dbReference type="EnsemblBacteria" id="AAK23242">
    <property type="protein sequence ID" value="AAK23242"/>
    <property type="gene ID" value="CC_1261"/>
</dbReference>
<dbReference type="KEGG" id="ccr:CC_1261"/>
<dbReference type="PATRIC" id="fig|190650.5.peg.1286"/>
<dbReference type="eggNOG" id="COG0199">
    <property type="taxonomic scope" value="Bacteria"/>
</dbReference>
<dbReference type="HOGENOM" id="CLU_139869_0_1_5"/>
<dbReference type="BioCyc" id="CAULO:CC1261-MONOMER"/>
<dbReference type="Proteomes" id="UP000001816">
    <property type="component" value="Chromosome"/>
</dbReference>
<dbReference type="GO" id="GO:0005737">
    <property type="term" value="C:cytoplasm"/>
    <property type="evidence" value="ECO:0007669"/>
    <property type="project" value="UniProtKB-ARBA"/>
</dbReference>
<dbReference type="GO" id="GO:0015935">
    <property type="term" value="C:small ribosomal subunit"/>
    <property type="evidence" value="ECO:0007669"/>
    <property type="project" value="TreeGrafter"/>
</dbReference>
<dbReference type="GO" id="GO:0019843">
    <property type="term" value="F:rRNA binding"/>
    <property type="evidence" value="ECO:0007669"/>
    <property type="project" value="UniProtKB-UniRule"/>
</dbReference>
<dbReference type="GO" id="GO:0003735">
    <property type="term" value="F:structural constituent of ribosome"/>
    <property type="evidence" value="ECO:0007669"/>
    <property type="project" value="InterPro"/>
</dbReference>
<dbReference type="GO" id="GO:0006412">
    <property type="term" value="P:translation"/>
    <property type="evidence" value="ECO:0007669"/>
    <property type="project" value="UniProtKB-UniRule"/>
</dbReference>
<dbReference type="FunFam" id="1.10.287.1480:FF:000001">
    <property type="entry name" value="30S ribosomal protein S14"/>
    <property type="match status" value="1"/>
</dbReference>
<dbReference type="Gene3D" id="1.10.287.1480">
    <property type="match status" value="1"/>
</dbReference>
<dbReference type="HAMAP" id="MF_00537">
    <property type="entry name" value="Ribosomal_uS14_1"/>
    <property type="match status" value="1"/>
</dbReference>
<dbReference type="InterPro" id="IPR001209">
    <property type="entry name" value="Ribosomal_uS14"/>
</dbReference>
<dbReference type="InterPro" id="IPR023036">
    <property type="entry name" value="Ribosomal_uS14_bac/plastid"/>
</dbReference>
<dbReference type="InterPro" id="IPR018271">
    <property type="entry name" value="Ribosomal_uS14_CS"/>
</dbReference>
<dbReference type="NCBIfam" id="NF006477">
    <property type="entry name" value="PRK08881.1"/>
    <property type="match status" value="1"/>
</dbReference>
<dbReference type="PANTHER" id="PTHR19836">
    <property type="entry name" value="30S RIBOSOMAL PROTEIN S14"/>
    <property type="match status" value="1"/>
</dbReference>
<dbReference type="PANTHER" id="PTHR19836:SF19">
    <property type="entry name" value="SMALL RIBOSOMAL SUBUNIT PROTEIN US14M"/>
    <property type="match status" value="1"/>
</dbReference>
<dbReference type="Pfam" id="PF00253">
    <property type="entry name" value="Ribosomal_S14"/>
    <property type="match status" value="1"/>
</dbReference>
<dbReference type="SUPFAM" id="SSF57716">
    <property type="entry name" value="Glucocorticoid receptor-like (DNA-binding domain)"/>
    <property type="match status" value="1"/>
</dbReference>
<dbReference type="PROSITE" id="PS00527">
    <property type="entry name" value="RIBOSOMAL_S14"/>
    <property type="match status" value="1"/>
</dbReference>
<organism>
    <name type="scientific">Caulobacter vibrioides (strain ATCC 19089 / CIP 103742 / CB 15)</name>
    <name type="common">Caulobacter crescentus</name>
    <dbReference type="NCBI Taxonomy" id="190650"/>
    <lineage>
        <taxon>Bacteria</taxon>
        <taxon>Pseudomonadati</taxon>
        <taxon>Pseudomonadota</taxon>
        <taxon>Alphaproteobacteria</taxon>
        <taxon>Caulobacterales</taxon>
        <taxon>Caulobacteraceae</taxon>
        <taxon>Caulobacter</taxon>
    </lineage>
</organism>
<gene>
    <name evidence="1" type="primary">rpsN</name>
    <name type="ordered locus">CC_1261</name>
</gene>
<protein>
    <recommendedName>
        <fullName evidence="1">Small ribosomal subunit protein uS14</fullName>
    </recommendedName>
    <alternativeName>
        <fullName evidence="2">30S ribosomal protein S14</fullName>
    </alternativeName>
</protein>
<reference key="1">
    <citation type="journal article" date="2001" name="Proc. Natl. Acad. Sci. U.S.A.">
        <title>Complete genome sequence of Caulobacter crescentus.</title>
        <authorList>
            <person name="Nierman W.C."/>
            <person name="Feldblyum T.V."/>
            <person name="Laub M.T."/>
            <person name="Paulsen I.T."/>
            <person name="Nelson K.E."/>
            <person name="Eisen J.A."/>
            <person name="Heidelberg J.F."/>
            <person name="Alley M.R.K."/>
            <person name="Ohta N."/>
            <person name="Maddock J.R."/>
            <person name="Potocka I."/>
            <person name="Nelson W.C."/>
            <person name="Newton A."/>
            <person name="Stephens C."/>
            <person name="Phadke N.D."/>
            <person name="Ely B."/>
            <person name="DeBoy R.T."/>
            <person name="Dodson R.J."/>
            <person name="Durkin A.S."/>
            <person name="Gwinn M.L."/>
            <person name="Haft D.H."/>
            <person name="Kolonay J.F."/>
            <person name="Smit J."/>
            <person name="Craven M.B."/>
            <person name="Khouri H.M."/>
            <person name="Shetty J."/>
            <person name="Berry K.J."/>
            <person name="Utterback T.R."/>
            <person name="Tran K."/>
            <person name="Wolf A.M."/>
            <person name="Vamathevan J.J."/>
            <person name="Ermolaeva M.D."/>
            <person name="White O."/>
            <person name="Salzberg S.L."/>
            <person name="Venter J.C."/>
            <person name="Shapiro L."/>
            <person name="Fraser C.M."/>
        </authorList>
    </citation>
    <scope>NUCLEOTIDE SEQUENCE [LARGE SCALE GENOMIC DNA]</scope>
    <source>
        <strain>ATCC 19089 / CIP 103742 / CB 15</strain>
    </source>
</reference>
<keyword id="KW-1185">Reference proteome</keyword>
<keyword id="KW-0687">Ribonucleoprotein</keyword>
<keyword id="KW-0689">Ribosomal protein</keyword>
<keyword id="KW-0694">RNA-binding</keyword>
<keyword id="KW-0699">rRNA-binding</keyword>
<evidence type="ECO:0000255" key="1">
    <source>
        <dbReference type="HAMAP-Rule" id="MF_00537"/>
    </source>
</evidence>
<evidence type="ECO:0000305" key="2"/>
<sequence>MAKKSAVNRNEAVKALVKKFAEKRAALKAIANDETLPLEERFEARLKLAKLPRNSAAIRIRNRCEVTGRPRAYYRKLKMSRVALRELGSQGQIPGLVKSSW</sequence>